<name>BIOB_HELHP</name>
<accession>Q7VFE6</accession>
<protein>
    <recommendedName>
        <fullName evidence="1">Biotin synthase</fullName>
        <ecNumber evidence="1">2.8.1.6</ecNumber>
    </recommendedName>
</protein>
<reference key="1">
    <citation type="journal article" date="2003" name="Proc. Natl. Acad. Sci. U.S.A.">
        <title>The complete genome sequence of the carcinogenic bacterium Helicobacter hepaticus.</title>
        <authorList>
            <person name="Suerbaum S."/>
            <person name="Josenhans C."/>
            <person name="Sterzenbach T."/>
            <person name="Drescher B."/>
            <person name="Brandt P."/>
            <person name="Bell M."/>
            <person name="Droege M."/>
            <person name="Fartmann B."/>
            <person name="Fischer H.-P."/>
            <person name="Ge Z."/>
            <person name="Hoerster A."/>
            <person name="Holland R."/>
            <person name="Klein K."/>
            <person name="Koenig J."/>
            <person name="Macko L."/>
            <person name="Mendz G.L."/>
            <person name="Nyakatura G."/>
            <person name="Schauer D.B."/>
            <person name="Shen Z."/>
            <person name="Weber J."/>
            <person name="Frosch M."/>
            <person name="Fox J.G."/>
        </authorList>
    </citation>
    <scope>NUCLEOTIDE SEQUENCE [LARGE SCALE GENOMIC DNA]</scope>
    <source>
        <strain>ATCC 51449 / 3B1</strain>
    </source>
</reference>
<evidence type="ECO:0000255" key="1">
    <source>
        <dbReference type="HAMAP-Rule" id="MF_01694"/>
    </source>
</evidence>
<evidence type="ECO:0000255" key="2">
    <source>
        <dbReference type="PROSITE-ProRule" id="PRU01266"/>
    </source>
</evidence>
<dbReference type="EC" id="2.8.1.6" evidence="1"/>
<dbReference type="EMBL" id="AE017125">
    <property type="protein sequence ID" value="AAP78328.1"/>
    <property type="molecule type" value="Genomic_DNA"/>
</dbReference>
<dbReference type="RefSeq" id="WP_011116570.1">
    <property type="nucleotide sequence ID" value="NC_004917.1"/>
</dbReference>
<dbReference type="SMR" id="Q7VFE6"/>
<dbReference type="STRING" id="235279.HH_1731"/>
<dbReference type="KEGG" id="hhe:HH_1731"/>
<dbReference type="eggNOG" id="COG0502">
    <property type="taxonomic scope" value="Bacteria"/>
</dbReference>
<dbReference type="HOGENOM" id="CLU_033172_2_1_7"/>
<dbReference type="OrthoDB" id="9786826at2"/>
<dbReference type="UniPathway" id="UPA00078">
    <property type="reaction ID" value="UER00162"/>
</dbReference>
<dbReference type="Proteomes" id="UP000002495">
    <property type="component" value="Chromosome"/>
</dbReference>
<dbReference type="GO" id="GO:0051537">
    <property type="term" value="F:2 iron, 2 sulfur cluster binding"/>
    <property type="evidence" value="ECO:0007669"/>
    <property type="project" value="UniProtKB-KW"/>
</dbReference>
<dbReference type="GO" id="GO:0051539">
    <property type="term" value="F:4 iron, 4 sulfur cluster binding"/>
    <property type="evidence" value="ECO:0007669"/>
    <property type="project" value="UniProtKB-KW"/>
</dbReference>
<dbReference type="GO" id="GO:0004076">
    <property type="term" value="F:biotin synthase activity"/>
    <property type="evidence" value="ECO:0007669"/>
    <property type="project" value="UniProtKB-UniRule"/>
</dbReference>
<dbReference type="GO" id="GO:0005506">
    <property type="term" value="F:iron ion binding"/>
    <property type="evidence" value="ECO:0007669"/>
    <property type="project" value="UniProtKB-UniRule"/>
</dbReference>
<dbReference type="GO" id="GO:0009102">
    <property type="term" value="P:biotin biosynthetic process"/>
    <property type="evidence" value="ECO:0007669"/>
    <property type="project" value="UniProtKB-UniRule"/>
</dbReference>
<dbReference type="CDD" id="cd01335">
    <property type="entry name" value="Radical_SAM"/>
    <property type="match status" value="1"/>
</dbReference>
<dbReference type="Gene3D" id="3.20.20.70">
    <property type="entry name" value="Aldolase class I"/>
    <property type="match status" value="1"/>
</dbReference>
<dbReference type="HAMAP" id="MF_01694">
    <property type="entry name" value="BioB"/>
    <property type="match status" value="1"/>
</dbReference>
<dbReference type="InterPro" id="IPR013785">
    <property type="entry name" value="Aldolase_TIM"/>
</dbReference>
<dbReference type="InterPro" id="IPR010722">
    <property type="entry name" value="BATS_dom"/>
</dbReference>
<dbReference type="InterPro" id="IPR002684">
    <property type="entry name" value="Biotin_synth/BioAB"/>
</dbReference>
<dbReference type="InterPro" id="IPR024177">
    <property type="entry name" value="Biotin_synthase"/>
</dbReference>
<dbReference type="InterPro" id="IPR006638">
    <property type="entry name" value="Elp3/MiaA/NifB-like_rSAM"/>
</dbReference>
<dbReference type="InterPro" id="IPR007197">
    <property type="entry name" value="rSAM"/>
</dbReference>
<dbReference type="NCBIfam" id="TIGR00433">
    <property type="entry name" value="bioB"/>
    <property type="match status" value="1"/>
</dbReference>
<dbReference type="NCBIfam" id="NF006308">
    <property type="entry name" value="PRK08508.1"/>
    <property type="match status" value="1"/>
</dbReference>
<dbReference type="PANTHER" id="PTHR22976">
    <property type="entry name" value="BIOTIN SYNTHASE"/>
    <property type="match status" value="1"/>
</dbReference>
<dbReference type="PANTHER" id="PTHR22976:SF2">
    <property type="entry name" value="BIOTIN SYNTHASE, MITOCHONDRIAL"/>
    <property type="match status" value="1"/>
</dbReference>
<dbReference type="Pfam" id="PF06968">
    <property type="entry name" value="BATS"/>
    <property type="match status" value="1"/>
</dbReference>
<dbReference type="Pfam" id="PF04055">
    <property type="entry name" value="Radical_SAM"/>
    <property type="match status" value="1"/>
</dbReference>
<dbReference type="PIRSF" id="PIRSF001619">
    <property type="entry name" value="Biotin_synth"/>
    <property type="match status" value="1"/>
</dbReference>
<dbReference type="SFLD" id="SFLDG01278">
    <property type="entry name" value="biotin_synthase_like"/>
    <property type="match status" value="1"/>
</dbReference>
<dbReference type="SFLD" id="SFLDS00029">
    <property type="entry name" value="Radical_SAM"/>
    <property type="match status" value="1"/>
</dbReference>
<dbReference type="SMART" id="SM00876">
    <property type="entry name" value="BATS"/>
    <property type="match status" value="1"/>
</dbReference>
<dbReference type="SMART" id="SM00729">
    <property type="entry name" value="Elp3"/>
    <property type="match status" value="1"/>
</dbReference>
<dbReference type="SUPFAM" id="SSF102114">
    <property type="entry name" value="Radical SAM enzymes"/>
    <property type="match status" value="1"/>
</dbReference>
<dbReference type="PROSITE" id="PS51918">
    <property type="entry name" value="RADICAL_SAM"/>
    <property type="match status" value="1"/>
</dbReference>
<comment type="function">
    <text evidence="1">Catalyzes the conversion of dethiobiotin (DTB) to biotin by the insertion of a sulfur atom into dethiobiotin via a radical-based mechanism.</text>
</comment>
<comment type="catalytic activity">
    <reaction evidence="1">
        <text>(4R,5S)-dethiobiotin + (sulfur carrier)-SH + 2 reduced [2Fe-2S]-[ferredoxin] + 2 S-adenosyl-L-methionine = (sulfur carrier)-H + biotin + 2 5'-deoxyadenosine + 2 L-methionine + 2 oxidized [2Fe-2S]-[ferredoxin]</text>
        <dbReference type="Rhea" id="RHEA:22060"/>
        <dbReference type="Rhea" id="RHEA-COMP:10000"/>
        <dbReference type="Rhea" id="RHEA-COMP:10001"/>
        <dbReference type="Rhea" id="RHEA-COMP:14737"/>
        <dbReference type="Rhea" id="RHEA-COMP:14739"/>
        <dbReference type="ChEBI" id="CHEBI:17319"/>
        <dbReference type="ChEBI" id="CHEBI:29917"/>
        <dbReference type="ChEBI" id="CHEBI:33737"/>
        <dbReference type="ChEBI" id="CHEBI:33738"/>
        <dbReference type="ChEBI" id="CHEBI:57586"/>
        <dbReference type="ChEBI" id="CHEBI:57844"/>
        <dbReference type="ChEBI" id="CHEBI:59789"/>
        <dbReference type="ChEBI" id="CHEBI:64428"/>
        <dbReference type="ChEBI" id="CHEBI:149473"/>
        <dbReference type="EC" id="2.8.1.6"/>
    </reaction>
</comment>
<comment type="cofactor">
    <cofactor evidence="1">
        <name>[4Fe-4S] cluster</name>
        <dbReference type="ChEBI" id="CHEBI:49883"/>
    </cofactor>
    <text evidence="1">Binds 1 [4Fe-4S] cluster. The cluster is coordinated with 3 cysteines and an exchangeable S-adenosyl-L-methionine.</text>
</comment>
<comment type="cofactor">
    <cofactor evidence="1">
        <name>[2Fe-2S] cluster</name>
        <dbReference type="ChEBI" id="CHEBI:190135"/>
    </cofactor>
    <text evidence="1">Binds 1 [2Fe-2S] cluster. The cluster is coordinated with 3 cysteines and 1 arginine.</text>
</comment>
<comment type="pathway">
    <text evidence="1">Cofactor biosynthesis; biotin biosynthesis; biotin from 7,8-diaminononanoate: step 2/2.</text>
</comment>
<comment type="subunit">
    <text evidence="1">Homodimer.</text>
</comment>
<comment type="similarity">
    <text evidence="1">Belongs to the radical SAM superfamily. Biotin synthase family.</text>
</comment>
<proteinExistence type="inferred from homology"/>
<sequence length="283" mass="31166">MQKISNEIFLCSICNVSSGDCPEDCKYCTQSAHYGTQIQRYKNKSIDKIVQEAKTLREYGALGFCLVTAGRSLESQKCEYIAKAASAIKKADLGLHIIACCGSADVDSLKYLKTNGVDSYNHNLETSKEFFPHICTTHTWKERFETCENTLKAELGLLSGGIFGLGESWGDRIELLKHLQILSPHTSPLNFYIANESLPLPMQTLSPQEALECVTLAREYLPNTRLMIAGGREAVFGDNQKPLFEAGINGVVLGDYLTTDGKAPKDDVAMIESYGYVAATNCH</sequence>
<keyword id="KW-0001">2Fe-2S</keyword>
<keyword id="KW-0004">4Fe-4S</keyword>
<keyword id="KW-0093">Biotin biosynthesis</keyword>
<keyword id="KW-0408">Iron</keyword>
<keyword id="KW-0411">Iron-sulfur</keyword>
<keyword id="KW-0479">Metal-binding</keyword>
<keyword id="KW-1185">Reference proteome</keyword>
<keyword id="KW-0949">S-adenosyl-L-methionine</keyword>
<keyword id="KW-0808">Transferase</keyword>
<feature type="chain" id="PRO_0000381423" description="Biotin synthase">
    <location>
        <begin position="1"/>
        <end position="283"/>
    </location>
</feature>
<feature type="domain" description="Radical SAM core" evidence="2">
    <location>
        <begin position="3"/>
        <end position="232"/>
    </location>
</feature>
<feature type="binding site" evidence="1">
    <location>
        <position position="21"/>
    </location>
    <ligand>
        <name>[4Fe-4S] cluster</name>
        <dbReference type="ChEBI" id="CHEBI:49883"/>
        <note>4Fe-4S-S-AdoMet</note>
    </ligand>
</feature>
<feature type="binding site" evidence="1">
    <location>
        <position position="25"/>
    </location>
    <ligand>
        <name>[4Fe-4S] cluster</name>
        <dbReference type="ChEBI" id="CHEBI:49883"/>
        <note>4Fe-4S-S-AdoMet</note>
    </ligand>
</feature>
<feature type="binding site" evidence="1">
    <location>
        <position position="28"/>
    </location>
    <ligand>
        <name>[4Fe-4S] cluster</name>
        <dbReference type="ChEBI" id="CHEBI:49883"/>
        <note>4Fe-4S-S-AdoMet</note>
    </ligand>
</feature>
<feature type="binding site" evidence="1">
    <location>
        <position position="65"/>
    </location>
    <ligand>
        <name>[2Fe-2S] cluster</name>
        <dbReference type="ChEBI" id="CHEBI:190135"/>
    </ligand>
</feature>
<feature type="binding site" evidence="1">
    <location>
        <position position="100"/>
    </location>
    <ligand>
        <name>[2Fe-2S] cluster</name>
        <dbReference type="ChEBI" id="CHEBI:190135"/>
    </ligand>
</feature>
<feature type="binding site" evidence="1">
    <location>
        <position position="225"/>
    </location>
    <ligand>
        <name>[2Fe-2S] cluster</name>
        <dbReference type="ChEBI" id="CHEBI:190135"/>
    </ligand>
</feature>
<gene>
    <name evidence="1" type="primary">bioB</name>
    <name type="ordered locus">HH_1731</name>
</gene>
<organism>
    <name type="scientific">Helicobacter hepaticus (strain ATCC 51449 / 3B1)</name>
    <dbReference type="NCBI Taxonomy" id="235279"/>
    <lineage>
        <taxon>Bacteria</taxon>
        <taxon>Pseudomonadati</taxon>
        <taxon>Campylobacterota</taxon>
        <taxon>Epsilonproteobacteria</taxon>
        <taxon>Campylobacterales</taxon>
        <taxon>Helicobacteraceae</taxon>
        <taxon>Helicobacter</taxon>
    </lineage>
</organism>